<reference key="1">
    <citation type="journal article" date="2008" name="J. Bacteriol.">
        <title>The pangenome structure of Escherichia coli: comparative genomic analysis of E. coli commensal and pathogenic isolates.</title>
        <authorList>
            <person name="Rasko D.A."/>
            <person name="Rosovitz M.J."/>
            <person name="Myers G.S.A."/>
            <person name="Mongodin E.F."/>
            <person name="Fricke W.F."/>
            <person name="Gajer P."/>
            <person name="Crabtree J."/>
            <person name="Sebaihia M."/>
            <person name="Thomson N.R."/>
            <person name="Chaudhuri R."/>
            <person name="Henderson I.R."/>
            <person name="Sperandio V."/>
            <person name="Ravel J."/>
        </authorList>
    </citation>
    <scope>NUCLEOTIDE SEQUENCE [LARGE SCALE GENOMIC DNA]</scope>
    <source>
        <strain>E24377A / ETEC</strain>
    </source>
</reference>
<organism>
    <name type="scientific">Escherichia coli O139:H28 (strain E24377A / ETEC)</name>
    <dbReference type="NCBI Taxonomy" id="331111"/>
    <lineage>
        <taxon>Bacteria</taxon>
        <taxon>Pseudomonadati</taxon>
        <taxon>Pseudomonadota</taxon>
        <taxon>Gammaproteobacteria</taxon>
        <taxon>Enterobacterales</taxon>
        <taxon>Enterobacteriaceae</taxon>
        <taxon>Escherichia</taxon>
    </lineage>
</organism>
<protein>
    <recommendedName>
        <fullName evidence="1">Large ribosomal subunit protein bL17</fullName>
    </recommendedName>
    <alternativeName>
        <fullName evidence="2">50S ribosomal protein L17</fullName>
    </alternativeName>
</protein>
<comment type="subunit">
    <text evidence="1">Part of the 50S ribosomal subunit. Contacts protein L32.</text>
</comment>
<comment type="similarity">
    <text evidence="1">Belongs to the bacterial ribosomal protein bL17 family.</text>
</comment>
<keyword id="KW-1185">Reference proteome</keyword>
<keyword id="KW-0687">Ribonucleoprotein</keyword>
<keyword id="KW-0689">Ribosomal protein</keyword>
<accession>A7ZSI3</accession>
<dbReference type="EMBL" id="CP000800">
    <property type="protein sequence ID" value="ABV19800.1"/>
    <property type="molecule type" value="Genomic_DNA"/>
</dbReference>
<dbReference type="RefSeq" id="WP_001216368.1">
    <property type="nucleotide sequence ID" value="NC_009801.1"/>
</dbReference>
<dbReference type="SMR" id="A7ZSI3"/>
<dbReference type="GeneID" id="97442834"/>
<dbReference type="KEGG" id="ecw:EcE24377A_3777"/>
<dbReference type="HOGENOM" id="CLU_074407_2_0_6"/>
<dbReference type="Proteomes" id="UP000001122">
    <property type="component" value="Chromosome"/>
</dbReference>
<dbReference type="GO" id="GO:0022625">
    <property type="term" value="C:cytosolic large ribosomal subunit"/>
    <property type="evidence" value="ECO:0007669"/>
    <property type="project" value="TreeGrafter"/>
</dbReference>
<dbReference type="GO" id="GO:0003735">
    <property type="term" value="F:structural constituent of ribosome"/>
    <property type="evidence" value="ECO:0007669"/>
    <property type="project" value="InterPro"/>
</dbReference>
<dbReference type="GO" id="GO:0006412">
    <property type="term" value="P:translation"/>
    <property type="evidence" value="ECO:0007669"/>
    <property type="project" value="UniProtKB-UniRule"/>
</dbReference>
<dbReference type="FunFam" id="3.90.1030.10:FF:000001">
    <property type="entry name" value="50S ribosomal protein L17"/>
    <property type="match status" value="1"/>
</dbReference>
<dbReference type="Gene3D" id="3.90.1030.10">
    <property type="entry name" value="Ribosomal protein L17"/>
    <property type="match status" value="1"/>
</dbReference>
<dbReference type="HAMAP" id="MF_01368">
    <property type="entry name" value="Ribosomal_bL17"/>
    <property type="match status" value="1"/>
</dbReference>
<dbReference type="InterPro" id="IPR000456">
    <property type="entry name" value="Ribosomal_bL17"/>
</dbReference>
<dbReference type="InterPro" id="IPR047859">
    <property type="entry name" value="Ribosomal_bL17_CS"/>
</dbReference>
<dbReference type="InterPro" id="IPR036373">
    <property type="entry name" value="Ribosomal_bL17_sf"/>
</dbReference>
<dbReference type="NCBIfam" id="TIGR00059">
    <property type="entry name" value="L17"/>
    <property type="match status" value="1"/>
</dbReference>
<dbReference type="PANTHER" id="PTHR14413:SF16">
    <property type="entry name" value="LARGE RIBOSOMAL SUBUNIT PROTEIN BL17M"/>
    <property type="match status" value="1"/>
</dbReference>
<dbReference type="PANTHER" id="PTHR14413">
    <property type="entry name" value="RIBOSOMAL PROTEIN L17"/>
    <property type="match status" value="1"/>
</dbReference>
<dbReference type="Pfam" id="PF01196">
    <property type="entry name" value="Ribosomal_L17"/>
    <property type="match status" value="1"/>
</dbReference>
<dbReference type="SUPFAM" id="SSF64263">
    <property type="entry name" value="Prokaryotic ribosomal protein L17"/>
    <property type="match status" value="1"/>
</dbReference>
<dbReference type="PROSITE" id="PS01167">
    <property type="entry name" value="RIBOSOMAL_L17"/>
    <property type="match status" value="1"/>
</dbReference>
<gene>
    <name evidence="1" type="primary">rplQ</name>
    <name type="ordered locus">EcE24377A_3777</name>
</gene>
<proteinExistence type="inferred from homology"/>
<evidence type="ECO:0000255" key="1">
    <source>
        <dbReference type="HAMAP-Rule" id="MF_01368"/>
    </source>
</evidence>
<evidence type="ECO:0000305" key="2"/>
<feature type="chain" id="PRO_1000068019" description="Large ribosomal subunit protein bL17">
    <location>
        <begin position="1"/>
        <end position="127"/>
    </location>
</feature>
<sequence>MRHRKSGRQLNRNSSHRQAMFRNMAGSLVRHEIIKTTLPKAKELRRVVEPLITLAKTDSVANRRLAFARTRDNEIVAKLFNELGPRFASRAGGYTRILKCGFRAGDNAPMAYIELVDRSEKAEAAAE</sequence>
<name>RL17_ECO24</name>